<comment type="function">
    <text>Soluble frizzled-related proteins (sFRPS) function as modulators of Wnt signaling through direct interaction with Wnts. They have a role in regulating cell growth and differentiation in specific cell types.</text>
</comment>
<comment type="subcellular location">
    <subcellularLocation>
        <location evidence="1">Secreted</location>
    </subcellularLocation>
    <text evidence="1">Cell membrane or extracellular matrix-associated. Released by heparin-binding (By similarity).</text>
</comment>
<comment type="developmental stage">
    <text evidence="5">Expression first detected at the pre-streak stage, uniformly distributed throughout the blastula. During primitive streak formation, expression localized to the anterior blastoderm including the anterior tip of primitive streak. At the beginning of Hensen node regression, strongly expressed, anterior to the node, in the ectoderm, in the presumptive neuroectoderm as well as in prechordal and lateral mesoderm. Later expression in the blastoderm anterior to Hensen node. During neurulation, high levels detected in the anterior neural plate. Expression also found in the neural folds including the pre-migratory cephalic neural crest cells, in the anterior ectoderm, in the lateral mesoderm, in the precordal plate and weaker expression in the notochord. From stage 10-14, strong expression in the anterior neural tube, including the optic vessels, where expression is limited to the presumptive neural retina and the overlying ectoderm. Later expression in the lens placode and the outer layer of the optic cup. Expression also in the prechordal plate, the Rathke pouch and later in the infundibular region. Expression in head mesenchyme, including migrating cephalic neural crest cells. Restricted expression within the metencephalic vesicle and ventral neural tube. Also expressed in the notochord, the otic vesicles, dorsal mesocardium and the area vasulosa. From stages 18-26, expression found in the telencephalic vesicles, in the epiphysis, in the optic cup, the trigeminal ganglia, and in a band which occupies the basal plate of prosomere one. During neural tube differentiation, expression follows a rosto-caudal gradient. Expression appears in the floor plate and in cells that occupy the medial neural tube. Expression also localized to the mesenchyme of the developing branchial arches, the most distal and ventral portion of the developing limb buds, including the ectodermal apical ridge and to the mesoderm of the developing kidney.</text>
</comment>
<comment type="domain">
    <text evidence="1">The FZ domain is involved in binding with Wnt ligands.</text>
</comment>
<comment type="similarity">
    <text evidence="6">Belongs to the secreted frizzled-related protein (sFRP) family.</text>
</comment>
<accession>Q9DEQ4</accession>
<keyword id="KW-0217">Developmental protein</keyword>
<keyword id="KW-0221">Differentiation</keyword>
<keyword id="KW-1015">Disulfide bond</keyword>
<keyword id="KW-0325">Glycoprotein</keyword>
<keyword id="KW-1185">Reference proteome</keyword>
<keyword id="KW-0964">Secreted</keyword>
<keyword id="KW-0732">Signal</keyword>
<keyword id="KW-0879">Wnt signaling pathway</keyword>
<gene>
    <name type="primary">SFRP1</name>
</gene>
<organism>
    <name type="scientific">Gallus gallus</name>
    <name type="common">Chicken</name>
    <dbReference type="NCBI Taxonomy" id="9031"/>
    <lineage>
        <taxon>Eukaryota</taxon>
        <taxon>Metazoa</taxon>
        <taxon>Chordata</taxon>
        <taxon>Craniata</taxon>
        <taxon>Vertebrata</taxon>
        <taxon>Euteleostomi</taxon>
        <taxon>Archelosauria</taxon>
        <taxon>Archosauria</taxon>
        <taxon>Dinosauria</taxon>
        <taxon>Saurischia</taxon>
        <taxon>Theropoda</taxon>
        <taxon>Coelurosauria</taxon>
        <taxon>Aves</taxon>
        <taxon>Neognathae</taxon>
        <taxon>Galloanserae</taxon>
        <taxon>Galliformes</taxon>
        <taxon>Phasianidae</taxon>
        <taxon>Phasianinae</taxon>
        <taxon>Gallus</taxon>
    </lineage>
</organism>
<feature type="signal peptide" evidence="2">
    <location>
        <begin position="1"/>
        <end position="31"/>
    </location>
</feature>
<feature type="chain" id="PRO_0000032540" description="Secreted frizzled-related protein 1">
    <location>
        <begin position="32"/>
        <end position="314"/>
    </location>
</feature>
<feature type="domain" description="FZ" evidence="3">
    <location>
        <begin position="53"/>
        <end position="169"/>
    </location>
</feature>
<feature type="domain" description="NTR" evidence="4">
    <location>
        <begin position="186"/>
        <end position="306"/>
    </location>
</feature>
<feature type="glycosylation site" description="N-linked (GlcNAc...) asparagine" evidence="2">
    <location>
        <position position="173"/>
    </location>
</feature>
<feature type="disulfide bond" evidence="1">
    <location>
        <begin position="58"/>
        <end position="121"/>
    </location>
</feature>
<feature type="disulfide bond" evidence="1">
    <location>
        <begin position="68"/>
        <end position="114"/>
    </location>
</feature>
<feature type="disulfide bond" evidence="1">
    <location>
        <begin position="105"/>
        <end position="140"/>
    </location>
</feature>
<feature type="disulfide bond" evidence="1">
    <location>
        <begin position="129"/>
        <end position="166"/>
    </location>
</feature>
<feature type="disulfide bond" evidence="1">
    <location>
        <begin position="133"/>
        <end position="157"/>
    </location>
</feature>
<feature type="disulfide bond" evidence="1">
    <location>
        <begin position="186"/>
        <end position="256"/>
    </location>
</feature>
<feature type="disulfide bond" evidence="1">
    <location>
        <begin position="189"/>
        <end position="258"/>
    </location>
</feature>
<feature type="disulfide bond" evidence="1">
    <location>
        <begin position="203"/>
        <end position="306"/>
    </location>
</feature>
<sequence>MGVGRSEGGRRGAALGVLLALGVALLAVGSASEYDYVSYQSDLGPYPGGRFYTKPHQCVAIPADLRLCHSVGYDKMVLPNLLDHETMAEVKHQASSWVPLLNKNCHMGTQVFLCSLFAPVCLDRPVYPCRWLCEAVRDSCEPVMQFFGFFWPEMLKCDQFPQDYVCIAMTTPNATEVSRPKGTTVCPPCDNEMKSEAIVEHLCASEFALKMTIKEVKKENGDKVIIPRKRKALKLGPIRKKNLKKLVLLLKNGADCPCHQLDNLGHHFLIMGRQVKTQHLLTAIYKWDKKNKEFKKFMKKVKAPDCPTFPSVFK</sequence>
<evidence type="ECO:0000250" key="1"/>
<evidence type="ECO:0000255" key="2"/>
<evidence type="ECO:0000255" key="3">
    <source>
        <dbReference type="PROSITE-ProRule" id="PRU00090"/>
    </source>
</evidence>
<evidence type="ECO:0000255" key="4">
    <source>
        <dbReference type="PROSITE-ProRule" id="PRU00295"/>
    </source>
</evidence>
<evidence type="ECO:0000269" key="5">
    <source>
    </source>
</evidence>
<evidence type="ECO:0000305" key="6"/>
<proteinExistence type="evidence at transcript level"/>
<reference key="1">
    <citation type="journal article" date="2000" name="Mech. Dev.">
        <title>Early and dynamic expression of cSfrp1 during chick embryo development.</title>
        <authorList>
            <person name="Esteve P."/>
            <person name="Morcillo J."/>
            <person name="Bovolenta P."/>
        </authorList>
    </citation>
    <scope>NUCLEOTIDE SEQUENCE [MRNA]</scope>
    <scope>DEVELOPMENTAL STAGE</scope>
</reference>
<protein>
    <recommendedName>
        <fullName>Secreted frizzled-related protein 1</fullName>
        <shortName>CsFRP1</shortName>
        <shortName>sFRP-1</shortName>
    </recommendedName>
</protein>
<dbReference type="EMBL" id="AJ404652">
    <property type="protein sequence ID" value="CAC15041.1"/>
    <property type="molecule type" value="mRNA"/>
</dbReference>
<dbReference type="SMR" id="Q9DEQ4"/>
<dbReference type="FunCoup" id="Q9DEQ4">
    <property type="interactions" value="6"/>
</dbReference>
<dbReference type="STRING" id="9031.ENSGALP00000060914"/>
<dbReference type="MEROPS" id="I93.002"/>
<dbReference type="GlyCosmos" id="Q9DEQ4">
    <property type="glycosylation" value="1 site, No reported glycans"/>
</dbReference>
<dbReference type="GlyGen" id="Q9DEQ4">
    <property type="glycosylation" value="1 site"/>
</dbReference>
<dbReference type="PaxDb" id="9031-ENSGALP00000005489"/>
<dbReference type="VEuPathDB" id="HostDB:geneid_395237"/>
<dbReference type="eggNOG" id="KOG3577">
    <property type="taxonomic scope" value="Eukaryota"/>
</dbReference>
<dbReference type="InParanoid" id="Q9DEQ4"/>
<dbReference type="OrthoDB" id="5985572at2759"/>
<dbReference type="PhylomeDB" id="Q9DEQ4"/>
<dbReference type="Proteomes" id="UP000000539">
    <property type="component" value="Unassembled WGS sequence"/>
</dbReference>
<dbReference type="GO" id="GO:0005615">
    <property type="term" value="C:extracellular space"/>
    <property type="evidence" value="ECO:0000318"/>
    <property type="project" value="GO_Central"/>
</dbReference>
<dbReference type="GO" id="GO:0017147">
    <property type="term" value="F:Wnt-protein binding"/>
    <property type="evidence" value="ECO:0000318"/>
    <property type="project" value="GO_Central"/>
</dbReference>
<dbReference type="GO" id="GO:0060070">
    <property type="term" value="P:canonical Wnt signaling pathway"/>
    <property type="evidence" value="ECO:0000318"/>
    <property type="project" value="GO_Central"/>
</dbReference>
<dbReference type="GO" id="GO:0030154">
    <property type="term" value="P:cell differentiation"/>
    <property type="evidence" value="ECO:0007669"/>
    <property type="project" value="UniProtKB-KW"/>
</dbReference>
<dbReference type="GO" id="GO:0035567">
    <property type="term" value="P:non-canonical Wnt signaling pathway"/>
    <property type="evidence" value="ECO:0000318"/>
    <property type="project" value="GO_Central"/>
</dbReference>
<dbReference type="CDD" id="cd07443">
    <property type="entry name" value="CRD_SFRP1"/>
    <property type="match status" value="1"/>
</dbReference>
<dbReference type="CDD" id="cd03580">
    <property type="entry name" value="NTR_Sfrp1_like"/>
    <property type="match status" value="1"/>
</dbReference>
<dbReference type="FunFam" id="2.40.50.120:FF:000003">
    <property type="entry name" value="Secreted frizzled-related protein 1"/>
    <property type="match status" value="1"/>
</dbReference>
<dbReference type="FunFam" id="1.10.2000.10:FF:000001">
    <property type="entry name" value="secreted frizzled-related protein 2"/>
    <property type="match status" value="1"/>
</dbReference>
<dbReference type="Gene3D" id="2.40.50.120">
    <property type="match status" value="1"/>
</dbReference>
<dbReference type="Gene3D" id="1.10.2000.10">
    <property type="entry name" value="Frizzled cysteine-rich domain"/>
    <property type="match status" value="1"/>
</dbReference>
<dbReference type="InterPro" id="IPR015526">
    <property type="entry name" value="Frizzled/SFRP"/>
</dbReference>
<dbReference type="InterPro" id="IPR020067">
    <property type="entry name" value="Frizzled_dom"/>
</dbReference>
<dbReference type="InterPro" id="IPR036790">
    <property type="entry name" value="Frizzled_dom_sf"/>
</dbReference>
<dbReference type="InterPro" id="IPR001134">
    <property type="entry name" value="Netrin_domain"/>
</dbReference>
<dbReference type="InterPro" id="IPR018933">
    <property type="entry name" value="Netrin_module_non-TIMP"/>
</dbReference>
<dbReference type="InterPro" id="IPR041760">
    <property type="entry name" value="SFRP1_CRD"/>
</dbReference>
<dbReference type="InterPro" id="IPR008993">
    <property type="entry name" value="TIMP-like_OB-fold"/>
</dbReference>
<dbReference type="PANTHER" id="PTHR11309">
    <property type="entry name" value="FRIZZLED"/>
    <property type="match status" value="1"/>
</dbReference>
<dbReference type="PANTHER" id="PTHR11309:SF87">
    <property type="entry name" value="SECRETED FRIZZLED-RELATED PROTEIN 1"/>
    <property type="match status" value="1"/>
</dbReference>
<dbReference type="Pfam" id="PF01392">
    <property type="entry name" value="Fz"/>
    <property type="match status" value="1"/>
</dbReference>
<dbReference type="Pfam" id="PF01759">
    <property type="entry name" value="NTR"/>
    <property type="match status" value="1"/>
</dbReference>
<dbReference type="SMART" id="SM00643">
    <property type="entry name" value="C345C"/>
    <property type="match status" value="1"/>
</dbReference>
<dbReference type="SMART" id="SM00063">
    <property type="entry name" value="FRI"/>
    <property type="match status" value="1"/>
</dbReference>
<dbReference type="SUPFAM" id="SSF63501">
    <property type="entry name" value="Frizzled cysteine-rich domain"/>
    <property type="match status" value="1"/>
</dbReference>
<dbReference type="SUPFAM" id="SSF50242">
    <property type="entry name" value="TIMP-like"/>
    <property type="match status" value="1"/>
</dbReference>
<dbReference type="PROSITE" id="PS50038">
    <property type="entry name" value="FZ"/>
    <property type="match status" value="1"/>
</dbReference>
<dbReference type="PROSITE" id="PS50189">
    <property type="entry name" value="NTR"/>
    <property type="match status" value="1"/>
</dbReference>
<name>SFRP1_CHICK</name>